<name>HOA1_METPP</name>
<dbReference type="EC" id="4.1.3.39" evidence="1"/>
<dbReference type="EMBL" id="CP000555">
    <property type="protein sequence ID" value="ABM95222.1"/>
    <property type="molecule type" value="Genomic_DNA"/>
</dbReference>
<dbReference type="SMR" id="A2SI33"/>
<dbReference type="STRING" id="420662.Mpe_A2266"/>
<dbReference type="KEGG" id="mpt:Mpe_A2266"/>
<dbReference type="eggNOG" id="COG0119">
    <property type="taxonomic scope" value="Bacteria"/>
</dbReference>
<dbReference type="HOGENOM" id="CLU_049173_0_0_4"/>
<dbReference type="Proteomes" id="UP000000366">
    <property type="component" value="Chromosome"/>
</dbReference>
<dbReference type="GO" id="GO:0003852">
    <property type="term" value="F:2-isopropylmalate synthase activity"/>
    <property type="evidence" value="ECO:0007669"/>
    <property type="project" value="TreeGrafter"/>
</dbReference>
<dbReference type="GO" id="GO:0008701">
    <property type="term" value="F:4-hydroxy-2-oxovalerate aldolase activity"/>
    <property type="evidence" value="ECO:0007669"/>
    <property type="project" value="UniProtKB-UniRule"/>
</dbReference>
<dbReference type="GO" id="GO:0030145">
    <property type="term" value="F:manganese ion binding"/>
    <property type="evidence" value="ECO:0007669"/>
    <property type="project" value="UniProtKB-UniRule"/>
</dbReference>
<dbReference type="GO" id="GO:0009056">
    <property type="term" value="P:catabolic process"/>
    <property type="evidence" value="ECO:0007669"/>
    <property type="project" value="UniProtKB-KW"/>
</dbReference>
<dbReference type="GO" id="GO:0009098">
    <property type="term" value="P:L-leucine biosynthetic process"/>
    <property type="evidence" value="ECO:0007669"/>
    <property type="project" value="TreeGrafter"/>
</dbReference>
<dbReference type="CDD" id="cd07943">
    <property type="entry name" value="DRE_TIM_HOA"/>
    <property type="match status" value="1"/>
</dbReference>
<dbReference type="Gene3D" id="1.10.8.60">
    <property type="match status" value="1"/>
</dbReference>
<dbReference type="Gene3D" id="3.20.20.70">
    <property type="entry name" value="Aldolase class I"/>
    <property type="match status" value="1"/>
</dbReference>
<dbReference type="HAMAP" id="MF_01656">
    <property type="entry name" value="HOA"/>
    <property type="match status" value="1"/>
</dbReference>
<dbReference type="InterPro" id="IPR050073">
    <property type="entry name" value="2-IPM_HCS-like"/>
</dbReference>
<dbReference type="InterPro" id="IPR017629">
    <property type="entry name" value="4OH_2_O-val_aldolase"/>
</dbReference>
<dbReference type="InterPro" id="IPR013785">
    <property type="entry name" value="Aldolase_TIM"/>
</dbReference>
<dbReference type="InterPro" id="IPR012425">
    <property type="entry name" value="DmpG_comm"/>
</dbReference>
<dbReference type="InterPro" id="IPR035685">
    <property type="entry name" value="DRE_TIM_HOA"/>
</dbReference>
<dbReference type="InterPro" id="IPR000891">
    <property type="entry name" value="PYR_CT"/>
</dbReference>
<dbReference type="NCBIfam" id="TIGR03217">
    <property type="entry name" value="4OH_2_O_val_ald"/>
    <property type="match status" value="1"/>
</dbReference>
<dbReference type="NCBIfam" id="NF006049">
    <property type="entry name" value="PRK08195.1"/>
    <property type="match status" value="1"/>
</dbReference>
<dbReference type="PANTHER" id="PTHR10277:SF9">
    <property type="entry name" value="2-ISOPROPYLMALATE SYNTHASE 1, CHLOROPLASTIC-RELATED"/>
    <property type="match status" value="1"/>
</dbReference>
<dbReference type="PANTHER" id="PTHR10277">
    <property type="entry name" value="HOMOCITRATE SYNTHASE-RELATED"/>
    <property type="match status" value="1"/>
</dbReference>
<dbReference type="Pfam" id="PF07836">
    <property type="entry name" value="DmpG_comm"/>
    <property type="match status" value="1"/>
</dbReference>
<dbReference type="Pfam" id="PF00682">
    <property type="entry name" value="HMGL-like"/>
    <property type="match status" value="1"/>
</dbReference>
<dbReference type="SUPFAM" id="SSF51569">
    <property type="entry name" value="Aldolase"/>
    <property type="match status" value="1"/>
</dbReference>
<dbReference type="SUPFAM" id="SSF89000">
    <property type="entry name" value="post-HMGL domain-like"/>
    <property type="match status" value="1"/>
</dbReference>
<dbReference type="PROSITE" id="PS50991">
    <property type="entry name" value="PYR_CT"/>
    <property type="match status" value="1"/>
</dbReference>
<keyword id="KW-0058">Aromatic hydrocarbons catabolism</keyword>
<keyword id="KW-0456">Lyase</keyword>
<keyword id="KW-0464">Manganese</keyword>
<keyword id="KW-0479">Metal-binding</keyword>
<keyword id="KW-1185">Reference proteome</keyword>
<gene>
    <name type="ordered locus">Mpe_A2266</name>
</gene>
<sequence>MMNLQGKKITVHDMTLRDGMHPKRHLMTLDQMKSIASGLDAAGVPLIEVTHGDGLGGSSVNYGFPAHSDEEYLGAVIPLMKQAKVSALLLPGIGTVDHLLMAKDLGVHTVRVATHCTEADVSEQHISKARSLEMDTVGFLMMAHMASPEKLVSQALLMEGYGANCIYVTDSAGYMLPDDVTVRLRAVRGALKPETELGFHGHHNLAMGVANSIAAVDAGANRIDAAAAGLGAGAGNTPMEVFIAVCDRMGIATGVDVFRIQDVAEDLVVPIMDHIIRVDRDSLTLGYAGVYSSFLLFAKRAEKKYGVPAREILVELGRRGMVGGQEDMIEDTAMTLARERAAAAHKAAA</sequence>
<organism>
    <name type="scientific">Methylibium petroleiphilum (strain ATCC BAA-1232 / LMG 22953 / PM1)</name>
    <dbReference type="NCBI Taxonomy" id="420662"/>
    <lineage>
        <taxon>Bacteria</taxon>
        <taxon>Pseudomonadati</taxon>
        <taxon>Pseudomonadota</taxon>
        <taxon>Betaproteobacteria</taxon>
        <taxon>Burkholderiales</taxon>
        <taxon>Sphaerotilaceae</taxon>
        <taxon>Methylibium</taxon>
    </lineage>
</organism>
<evidence type="ECO:0000255" key="1">
    <source>
        <dbReference type="HAMAP-Rule" id="MF_01656"/>
    </source>
</evidence>
<proteinExistence type="inferred from homology"/>
<protein>
    <recommendedName>
        <fullName evidence="1">4-hydroxy-2-oxovalerate aldolase 1</fullName>
        <shortName evidence="1">HOA 1</shortName>
        <ecNumber evidence="1">4.1.3.39</ecNumber>
    </recommendedName>
    <alternativeName>
        <fullName evidence="1">4-hydroxy-2-keto-pentanoic acid aldolase 1</fullName>
    </alternativeName>
    <alternativeName>
        <fullName evidence="1">4-hydroxy-2-oxopentanoate aldolase 1</fullName>
    </alternativeName>
</protein>
<reference key="1">
    <citation type="journal article" date="2007" name="J. Bacteriol.">
        <title>Whole-genome analysis of the methyl tert-butyl ether-degrading beta-proteobacterium Methylibium petroleiphilum PM1.</title>
        <authorList>
            <person name="Kane S.R."/>
            <person name="Chakicherla A.Y."/>
            <person name="Chain P.S.G."/>
            <person name="Schmidt R."/>
            <person name="Shin M.W."/>
            <person name="Legler T.C."/>
            <person name="Scow K.M."/>
            <person name="Larimer F.W."/>
            <person name="Lucas S.M."/>
            <person name="Richardson P.M."/>
            <person name="Hristova K.R."/>
        </authorList>
    </citation>
    <scope>NUCLEOTIDE SEQUENCE [LARGE SCALE GENOMIC DNA]</scope>
    <source>
        <strain>ATCC BAA-1232 / LMG 22953 / PM1</strain>
    </source>
</reference>
<feature type="chain" id="PRO_0000387840" description="4-hydroxy-2-oxovalerate aldolase 1">
    <location>
        <begin position="1"/>
        <end position="349"/>
    </location>
</feature>
<feature type="domain" description="Pyruvate carboxyltransferase" evidence="1">
    <location>
        <begin position="9"/>
        <end position="261"/>
    </location>
</feature>
<feature type="active site" description="Proton acceptor" evidence="1">
    <location>
        <position position="21"/>
    </location>
</feature>
<feature type="binding site" evidence="1">
    <location>
        <begin position="17"/>
        <end position="18"/>
    </location>
    <ligand>
        <name>substrate</name>
    </ligand>
</feature>
<feature type="binding site" evidence="1">
    <location>
        <position position="18"/>
    </location>
    <ligand>
        <name>Mn(2+)</name>
        <dbReference type="ChEBI" id="CHEBI:29035"/>
    </ligand>
</feature>
<feature type="binding site" evidence="1">
    <location>
        <position position="171"/>
    </location>
    <ligand>
        <name>substrate</name>
    </ligand>
</feature>
<feature type="binding site" evidence="1">
    <location>
        <position position="200"/>
    </location>
    <ligand>
        <name>Mn(2+)</name>
        <dbReference type="ChEBI" id="CHEBI:29035"/>
    </ligand>
</feature>
<feature type="binding site" evidence="1">
    <location>
        <position position="200"/>
    </location>
    <ligand>
        <name>substrate</name>
    </ligand>
</feature>
<feature type="binding site" evidence="1">
    <location>
        <position position="202"/>
    </location>
    <ligand>
        <name>Mn(2+)</name>
        <dbReference type="ChEBI" id="CHEBI:29035"/>
    </ligand>
</feature>
<feature type="binding site" evidence="1">
    <location>
        <position position="291"/>
    </location>
    <ligand>
        <name>substrate</name>
    </ligand>
</feature>
<feature type="site" description="Transition state stabilizer" evidence="1">
    <location>
        <position position="17"/>
    </location>
</feature>
<accession>A2SI33</accession>
<comment type="catalytic activity">
    <reaction evidence="1">
        <text>(S)-4-hydroxy-2-oxopentanoate = acetaldehyde + pyruvate</text>
        <dbReference type="Rhea" id="RHEA:22624"/>
        <dbReference type="ChEBI" id="CHEBI:15343"/>
        <dbReference type="ChEBI" id="CHEBI:15361"/>
        <dbReference type="ChEBI" id="CHEBI:73143"/>
        <dbReference type="EC" id="4.1.3.39"/>
    </reaction>
</comment>
<comment type="similarity">
    <text evidence="1">Belongs to the 4-hydroxy-2-oxovalerate aldolase family.</text>
</comment>